<name>O17A_CONCF</name>
<accession>P0C1C8</accession>
<sequence length="31" mass="3245">TCKQKGEGCSLDVECCSSSCKPGGPLFDFDC</sequence>
<comment type="function">
    <text evidence="1">Gamma-conotoxins may act on voltage-gated non-specific cation pacemaker channels (HCN) (By similarity). Elicits toxic effects in the freshwater snail Pomacea paludosa after intramuscular injection, but it has no effect when injected intracerebrally into mice.</text>
</comment>
<comment type="subcellular location">
    <subcellularLocation>
        <location>Secreted</location>
    </subcellularLocation>
</comment>
<comment type="tissue specificity">
    <text>Expressed by the venom duct.</text>
</comment>
<comment type="domain">
    <text evidence="1">The presence of a 'disulfide through disulfide knot' structurally defines this protein as a knottin.</text>
</comment>
<comment type="domain">
    <text>The cysteine framework is VI/VII (C-C-CC-C-C).</text>
</comment>
<comment type="mass spectrometry" mass="3236.16" method="MALDI" evidence="2">
    <text>Decarboxylated.</text>
</comment>
<comment type="similarity">
    <text evidence="3">Belongs to the conotoxin O1 superfamily.</text>
</comment>
<organism>
    <name type="scientific">Conus cancellatus</name>
    <name type="common">Cancellate cone</name>
    <name type="synonym">Conus austini</name>
    <dbReference type="NCBI Taxonomy" id="289020"/>
    <lineage>
        <taxon>Eukaryota</taxon>
        <taxon>Metazoa</taxon>
        <taxon>Spiralia</taxon>
        <taxon>Lophotrochozoa</taxon>
        <taxon>Mollusca</taxon>
        <taxon>Gastropoda</taxon>
        <taxon>Caenogastropoda</taxon>
        <taxon>Neogastropoda</taxon>
        <taxon>Conoidea</taxon>
        <taxon>Conidae</taxon>
        <taxon>Conus</taxon>
        <taxon>Dauciconus</taxon>
    </lineage>
</organism>
<proteinExistence type="evidence at protein level"/>
<dbReference type="SMR" id="P0C1C8"/>
<dbReference type="ConoServer" id="1473">
    <property type="toxin name" value="AsVIIA"/>
</dbReference>
<dbReference type="GO" id="GO:0005576">
    <property type="term" value="C:extracellular region"/>
    <property type="evidence" value="ECO:0007669"/>
    <property type="project" value="UniProtKB-SubCell"/>
</dbReference>
<dbReference type="GO" id="GO:0099106">
    <property type="term" value="F:ion channel regulator activity"/>
    <property type="evidence" value="ECO:0007669"/>
    <property type="project" value="UniProtKB-KW"/>
</dbReference>
<dbReference type="GO" id="GO:0090729">
    <property type="term" value="F:toxin activity"/>
    <property type="evidence" value="ECO:0007669"/>
    <property type="project" value="UniProtKB-KW"/>
</dbReference>
<keyword id="KW-0903">Direct protein sequencing</keyword>
<keyword id="KW-1015">Disulfide bond</keyword>
<keyword id="KW-0301">Gamma-carboxyglutamic acid</keyword>
<keyword id="KW-0872">Ion channel impairing toxin</keyword>
<keyword id="KW-0960">Knottin</keyword>
<keyword id="KW-0528">Neurotoxin</keyword>
<keyword id="KW-0964">Secreted</keyword>
<keyword id="KW-0800">Toxin</keyword>
<evidence type="ECO:0000250" key="1"/>
<evidence type="ECO:0000269" key="2">
    <source>
    </source>
</evidence>
<evidence type="ECO:0000305" key="3"/>
<reference key="1">
    <citation type="journal article" date="2006" name="Peptides">
        <title>Amino acid sequence and biological activity of a gamma-conotoxin-like peptide from the worm-hunting snail Conus austini.</title>
        <authorList>
            <person name="Zugasti-Cruz A."/>
            <person name="Maillo M."/>
            <person name="Lopez-Vera E."/>
            <person name="Falcon A."/>
            <person name="Heimer de la Cotera E.P."/>
            <person name="Olivera B.M."/>
            <person name="Aguilar M.B."/>
        </authorList>
    </citation>
    <scope>PROTEIN SEQUENCE</scope>
    <scope>GAMMA-CARBOXYGLUTAMATION AT GLU-14</scope>
    <scope>MASS SPECTROMETRY</scope>
    <source>
        <tissue>Venom</tissue>
    </source>
</reference>
<feature type="peptide" id="PRO_0000234827" description="Gamma-conotoxin-like As7a">
    <location>
        <begin position="1"/>
        <end position="31"/>
    </location>
</feature>
<feature type="modified residue" description="4-carboxyglutamate" evidence="2">
    <location>
        <position position="14"/>
    </location>
</feature>
<feature type="disulfide bond" evidence="1">
    <location>
        <begin position="2"/>
        <end position="16"/>
    </location>
</feature>
<feature type="disulfide bond" evidence="1">
    <location>
        <begin position="9"/>
        <end position="20"/>
    </location>
</feature>
<feature type="disulfide bond" evidence="1">
    <location>
        <begin position="15"/>
        <end position="31"/>
    </location>
</feature>
<protein>
    <recommendedName>
        <fullName>Gamma-conotoxin-like As7a</fullName>
    </recommendedName>
</protein>